<proteinExistence type="inferred from homology"/>
<feature type="chain" id="PRO_1000117090" description="ATP phosphoribosyltransferase">
    <location>
        <begin position="1"/>
        <end position="299"/>
    </location>
</feature>
<sequence>MTDNTRLRIAMQKSGRLSDDSRELLARCGIKINLHTQRLIAMAENMPIDILRVRDDDIPGLVMDGVVDLGIIGENVLEEELLNRRAQGEDPRYFTLRRLDFGGCRLSLATPVDEAWDGPLSLNGKRIATSYPHLLKRYLDQKGISFKSCLLNGSVEVAPRAGLADAICDLVSTGATLEANGLREVEVIYRSKACLIQRDGEMEESKQQLIDKLLTRIQGVIQARESKYIMMHAPTERLDEVIALLPGAERPTILPLAGDQQRVAMHMVSSETLFWETMEKLKALGASSILVLPIEKMME</sequence>
<dbReference type="EC" id="2.4.2.17" evidence="1"/>
<dbReference type="EMBL" id="CU928160">
    <property type="protein sequence ID" value="CAQ98937.1"/>
    <property type="molecule type" value="Genomic_DNA"/>
</dbReference>
<dbReference type="RefSeq" id="WP_000131782.1">
    <property type="nucleotide sequence ID" value="NC_011741.1"/>
</dbReference>
<dbReference type="SMR" id="B7M3Z8"/>
<dbReference type="GeneID" id="93775154"/>
<dbReference type="KEGG" id="ecr:ECIAI1_2089"/>
<dbReference type="HOGENOM" id="CLU_038115_1_0_6"/>
<dbReference type="UniPathway" id="UPA00031">
    <property type="reaction ID" value="UER00006"/>
</dbReference>
<dbReference type="GO" id="GO:0005737">
    <property type="term" value="C:cytoplasm"/>
    <property type="evidence" value="ECO:0007669"/>
    <property type="project" value="UniProtKB-SubCell"/>
</dbReference>
<dbReference type="GO" id="GO:0005524">
    <property type="term" value="F:ATP binding"/>
    <property type="evidence" value="ECO:0007669"/>
    <property type="project" value="UniProtKB-KW"/>
</dbReference>
<dbReference type="GO" id="GO:0003879">
    <property type="term" value="F:ATP phosphoribosyltransferase activity"/>
    <property type="evidence" value="ECO:0007669"/>
    <property type="project" value="UniProtKB-UniRule"/>
</dbReference>
<dbReference type="GO" id="GO:0000287">
    <property type="term" value="F:magnesium ion binding"/>
    <property type="evidence" value="ECO:0007669"/>
    <property type="project" value="UniProtKB-UniRule"/>
</dbReference>
<dbReference type="GO" id="GO:0000105">
    <property type="term" value="P:L-histidine biosynthetic process"/>
    <property type="evidence" value="ECO:0007669"/>
    <property type="project" value="UniProtKB-UniRule"/>
</dbReference>
<dbReference type="CDD" id="cd13592">
    <property type="entry name" value="PBP2_HisGL2"/>
    <property type="match status" value="1"/>
</dbReference>
<dbReference type="FunFam" id="3.30.70.120:FF:000002">
    <property type="entry name" value="ATP phosphoribosyltransferase"/>
    <property type="match status" value="1"/>
</dbReference>
<dbReference type="FunFam" id="3.40.190.10:FF:000008">
    <property type="entry name" value="ATP phosphoribosyltransferase"/>
    <property type="match status" value="1"/>
</dbReference>
<dbReference type="Gene3D" id="3.30.70.120">
    <property type="match status" value="1"/>
</dbReference>
<dbReference type="Gene3D" id="3.40.190.10">
    <property type="entry name" value="Periplasmic binding protein-like II"/>
    <property type="match status" value="2"/>
</dbReference>
<dbReference type="HAMAP" id="MF_00079">
    <property type="entry name" value="HisG_Long"/>
    <property type="match status" value="1"/>
</dbReference>
<dbReference type="InterPro" id="IPR020621">
    <property type="entry name" value="ATP-PRT_HisG_long"/>
</dbReference>
<dbReference type="InterPro" id="IPR013820">
    <property type="entry name" value="ATP_PRibTrfase_cat"/>
</dbReference>
<dbReference type="InterPro" id="IPR018198">
    <property type="entry name" value="ATP_PRibTrfase_CS"/>
</dbReference>
<dbReference type="InterPro" id="IPR001348">
    <property type="entry name" value="ATP_PRibTrfase_HisG"/>
</dbReference>
<dbReference type="InterPro" id="IPR013115">
    <property type="entry name" value="HisG_C"/>
</dbReference>
<dbReference type="InterPro" id="IPR011322">
    <property type="entry name" value="N-reg_PII-like_a/b"/>
</dbReference>
<dbReference type="InterPro" id="IPR015867">
    <property type="entry name" value="N-reg_PII/ATP_PRibTrfase_C"/>
</dbReference>
<dbReference type="NCBIfam" id="TIGR00070">
    <property type="entry name" value="hisG"/>
    <property type="match status" value="1"/>
</dbReference>
<dbReference type="NCBIfam" id="TIGR03455">
    <property type="entry name" value="HisG_C-term"/>
    <property type="match status" value="1"/>
</dbReference>
<dbReference type="PANTHER" id="PTHR21403:SF8">
    <property type="entry name" value="ATP PHOSPHORIBOSYLTRANSFERASE"/>
    <property type="match status" value="1"/>
</dbReference>
<dbReference type="PANTHER" id="PTHR21403">
    <property type="entry name" value="ATP PHOSPHORIBOSYLTRANSFERASE ATP-PRTASE"/>
    <property type="match status" value="1"/>
</dbReference>
<dbReference type="Pfam" id="PF01634">
    <property type="entry name" value="HisG"/>
    <property type="match status" value="1"/>
</dbReference>
<dbReference type="Pfam" id="PF08029">
    <property type="entry name" value="HisG_C"/>
    <property type="match status" value="1"/>
</dbReference>
<dbReference type="SUPFAM" id="SSF54913">
    <property type="entry name" value="GlnB-like"/>
    <property type="match status" value="1"/>
</dbReference>
<dbReference type="SUPFAM" id="SSF53850">
    <property type="entry name" value="Periplasmic binding protein-like II"/>
    <property type="match status" value="1"/>
</dbReference>
<dbReference type="PROSITE" id="PS01316">
    <property type="entry name" value="ATP_P_PHORIBOSYLTR"/>
    <property type="match status" value="1"/>
</dbReference>
<keyword id="KW-0028">Amino-acid biosynthesis</keyword>
<keyword id="KW-0067">ATP-binding</keyword>
<keyword id="KW-0963">Cytoplasm</keyword>
<keyword id="KW-0328">Glycosyltransferase</keyword>
<keyword id="KW-0368">Histidine biosynthesis</keyword>
<keyword id="KW-0460">Magnesium</keyword>
<keyword id="KW-0479">Metal-binding</keyword>
<keyword id="KW-0547">Nucleotide-binding</keyword>
<keyword id="KW-0808">Transferase</keyword>
<evidence type="ECO:0000255" key="1">
    <source>
        <dbReference type="HAMAP-Rule" id="MF_00079"/>
    </source>
</evidence>
<accession>B7M3Z8</accession>
<protein>
    <recommendedName>
        <fullName evidence="1">ATP phosphoribosyltransferase</fullName>
        <shortName evidence="1">ATP-PRT</shortName>
        <shortName evidence="1">ATP-PRTase</shortName>
        <ecNumber evidence="1">2.4.2.17</ecNumber>
    </recommendedName>
</protein>
<reference key="1">
    <citation type="journal article" date="2009" name="PLoS Genet.">
        <title>Organised genome dynamics in the Escherichia coli species results in highly diverse adaptive paths.</title>
        <authorList>
            <person name="Touchon M."/>
            <person name="Hoede C."/>
            <person name="Tenaillon O."/>
            <person name="Barbe V."/>
            <person name="Baeriswyl S."/>
            <person name="Bidet P."/>
            <person name="Bingen E."/>
            <person name="Bonacorsi S."/>
            <person name="Bouchier C."/>
            <person name="Bouvet O."/>
            <person name="Calteau A."/>
            <person name="Chiapello H."/>
            <person name="Clermont O."/>
            <person name="Cruveiller S."/>
            <person name="Danchin A."/>
            <person name="Diard M."/>
            <person name="Dossat C."/>
            <person name="Karoui M.E."/>
            <person name="Frapy E."/>
            <person name="Garry L."/>
            <person name="Ghigo J.M."/>
            <person name="Gilles A.M."/>
            <person name="Johnson J."/>
            <person name="Le Bouguenec C."/>
            <person name="Lescat M."/>
            <person name="Mangenot S."/>
            <person name="Martinez-Jehanne V."/>
            <person name="Matic I."/>
            <person name="Nassif X."/>
            <person name="Oztas S."/>
            <person name="Petit M.A."/>
            <person name="Pichon C."/>
            <person name="Rouy Z."/>
            <person name="Ruf C.S."/>
            <person name="Schneider D."/>
            <person name="Tourret J."/>
            <person name="Vacherie B."/>
            <person name="Vallenet D."/>
            <person name="Medigue C."/>
            <person name="Rocha E.P.C."/>
            <person name="Denamur E."/>
        </authorList>
    </citation>
    <scope>NUCLEOTIDE SEQUENCE [LARGE SCALE GENOMIC DNA]</scope>
    <source>
        <strain>IAI1</strain>
    </source>
</reference>
<comment type="function">
    <text evidence="1">Catalyzes the condensation of ATP and 5-phosphoribose 1-diphosphate to form N'-(5'-phosphoribosyl)-ATP (PR-ATP). Has a crucial role in the pathway because the rate of histidine biosynthesis seems to be controlled primarily by regulation of HisG enzymatic activity.</text>
</comment>
<comment type="catalytic activity">
    <reaction evidence="1">
        <text>1-(5-phospho-beta-D-ribosyl)-ATP + diphosphate = 5-phospho-alpha-D-ribose 1-diphosphate + ATP</text>
        <dbReference type="Rhea" id="RHEA:18473"/>
        <dbReference type="ChEBI" id="CHEBI:30616"/>
        <dbReference type="ChEBI" id="CHEBI:33019"/>
        <dbReference type="ChEBI" id="CHEBI:58017"/>
        <dbReference type="ChEBI" id="CHEBI:73183"/>
        <dbReference type="EC" id="2.4.2.17"/>
    </reaction>
</comment>
<comment type="cofactor">
    <cofactor evidence="1">
        <name>Mg(2+)</name>
        <dbReference type="ChEBI" id="CHEBI:18420"/>
    </cofactor>
</comment>
<comment type="activity regulation">
    <text evidence="1">Feedback inhibited by histidine.</text>
</comment>
<comment type="pathway">
    <text evidence="1">Amino-acid biosynthesis; L-histidine biosynthesis; L-histidine from 5-phospho-alpha-D-ribose 1-diphosphate: step 1/9.</text>
</comment>
<comment type="subunit">
    <text evidence="1">Equilibrium between an active dimeric form, an inactive hexameric form and higher aggregates. Interconversion between the various forms is largely reversible and is influenced by the natural substrates and inhibitors of the enzyme.</text>
</comment>
<comment type="subcellular location">
    <subcellularLocation>
        <location evidence="1">Cytoplasm</location>
    </subcellularLocation>
</comment>
<comment type="similarity">
    <text evidence="1">Belongs to the ATP phosphoribosyltransferase family. Long subfamily.</text>
</comment>
<name>HIS1_ECO8A</name>
<gene>
    <name evidence="1" type="primary">hisG</name>
    <name type="ordered locus">ECIAI1_2089</name>
</gene>
<organism>
    <name type="scientific">Escherichia coli O8 (strain IAI1)</name>
    <dbReference type="NCBI Taxonomy" id="585034"/>
    <lineage>
        <taxon>Bacteria</taxon>
        <taxon>Pseudomonadati</taxon>
        <taxon>Pseudomonadota</taxon>
        <taxon>Gammaproteobacteria</taxon>
        <taxon>Enterobacterales</taxon>
        <taxon>Enterobacteriaceae</taxon>
        <taxon>Escherichia</taxon>
    </lineage>
</organism>